<protein>
    <recommendedName>
        <fullName evidence="1">Ribosomal protein L11 methyltransferase</fullName>
        <shortName evidence="1">L11 Mtase</shortName>
        <ecNumber evidence="1">2.1.1.-</ecNumber>
    </recommendedName>
</protein>
<organism>
    <name type="scientific">Thermoanaerobacter sp. (strain X514)</name>
    <dbReference type="NCBI Taxonomy" id="399726"/>
    <lineage>
        <taxon>Bacteria</taxon>
        <taxon>Bacillati</taxon>
        <taxon>Bacillota</taxon>
        <taxon>Clostridia</taxon>
        <taxon>Thermoanaerobacterales</taxon>
        <taxon>Thermoanaerobacteraceae</taxon>
        <taxon>Thermoanaerobacter</taxon>
    </lineage>
</organism>
<keyword id="KW-0963">Cytoplasm</keyword>
<keyword id="KW-0489">Methyltransferase</keyword>
<keyword id="KW-0949">S-adenosyl-L-methionine</keyword>
<keyword id="KW-0808">Transferase</keyword>
<accession>B0K3X8</accession>
<feature type="chain" id="PRO_1000132840" description="Ribosomal protein L11 methyltransferase">
    <location>
        <begin position="1"/>
        <end position="308"/>
    </location>
</feature>
<feature type="binding site" evidence="1">
    <location>
        <position position="160"/>
    </location>
    <ligand>
        <name>S-adenosyl-L-methionine</name>
        <dbReference type="ChEBI" id="CHEBI:59789"/>
    </ligand>
</feature>
<feature type="binding site" evidence="1">
    <location>
        <position position="181"/>
    </location>
    <ligand>
        <name>S-adenosyl-L-methionine</name>
        <dbReference type="ChEBI" id="CHEBI:59789"/>
    </ligand>
</feature>
<feature type="binding site" evidence="1">
    <location>
        <position position="203"/>
    </location>
    <ligand>
        <name>S-adenosyl-L-methionine</name>
        <dbReference type="ChEBI" id="CHEBI:59789"/>
    </ligand>
</feature>
<feature type="binding site" evidence="1">
    <location>
        <position position="245"/>
    </location>
    <ligand>
        <name>S-adenosyl-L-methionine</name>
        <dbReference type="ChEBI" id="CHEBI:59789"/>
    </ligand>
</feature>
<dbReference type="EC" id="2.1.1.-" evidence="1"/>
<dbReference type="EMBL" id="CP000923">
    <property type="protein sequence ID" value="ABY93349.1"/>
    <property type="molecule type" value="Genomic_DNA"/>
</dbReference>
<dbReference type="RefSeq" id="WP_009052594.1">
    <property type="nucleotide sequence ID" value="NC_010320.1"/>
</dbReference>
<dbReference type="SMR" id="B0K3X8"/>
<dbReference type="KEGG" id="tex:Teth514_2077"/>
<dbReference type="HOGENOM" id="CLU_049382_0_1_9"/>
<dbReference type="Proteomes" id="UP000002155">
    <property type="component" value="Chromosome"/>
</dbReference>
<dbReference type="GO" id="GO:0005737">
    <property type="term" value="C:cytoplasm"/>
    <property type="evidence" value="ECO:0007669"/>
    <property type="project" value="UniProtKB-SubCell"/>
</dbReference>
<dbReference type="GO" id="GO:0016279">
    <property type="term" value="F:protein-lysine N-methyltransferase activity"/>
    <property type="evidence" value="ECO:0007669"/>
    <property type="project" value="RHEA"/>
</dbReference>
<dbReference type="GO" id="GO:0032259">
    <property type="term" value="P:methylation"/>
    <property type="evidence" value="ECO:0007669"/>
    <property type="project" value="UniProtKB-KW"/>
</dbReference>
<dbReference type="CDD" id="cd02440">
    <property type="entry name" value="AdoMet_MTases"/>
    <property type="match status" value="1"/>
</dbReference>
<dbReference type="Gene3D" id="3.40.50.150">
    <property type="entry name" value="Vaccinia Virus protein VP39"/>
    <property type="match status" value="1"/>
</dbReference>
<dbReference type="HAMAP" id="MF_00735">
    <property type="entry name" value="Methyltr_PrmA"/>
    <property type="match status" value="1"/>
</dbReference>
<dbReference type="InterPro" id="IPR050078">
    <property type="entry name" value="Ribosomal_L11_MeTrfase_PrmA"/>
</dbReference>
<dbReference type="InterPro" id="IPR004498">
    <property type="entry name" value="Ribosomal_PrmA_MeTrfase"/>
</dbReference>
<dbReference type="InterPro" id="IPR029063">
    <property type="entry name" value="SAM-dependent_MTases_sf"/>
</dbReference>
<dbReference type="NCBIfam" id="TIGR00406">
    <property type="entry name" value="prmA"/>
    <property type="match status" value="1"/>
</dbReference>
<dbReference type="PANTHER" id="PTHR43648">
    <property type="entry name" value="ELECTRON TRANSFER FLAVOPROTEIN BETA SUBUNIT LYSINE METHYLTRANSFERASE"/>
    <property type="match status" value="1"/>
</dbReference>
<dbReference type="PANTHER" id="PTHR43648:SF1">
    <property type="entry name" value="ELECTRON TRANSFER FLAVOPROTEIN BETA SUBUNIT LYSINE METHYLTRANSFERASE"/>
    <property type="match status" value="1"/>
</dbReference>
<dbReference type="Pfam" id="PF06325">
    <property type="entry name" value="PrmA"/>
    <property type="match status" value="1"/>
</dbReference>
<dbReference type="PIRSF" id="PIRSF000401">
    <property type="entry name" value="RPL11_MTase"/>
    <property type="match status" value="1"/>
</dbReference>
<dbReference type="SUPFAM" id="SSF53335">
    <property type="entry name" value="S-adenosyl-L-methionine-dependent methyltransferases"/>
    <property type="match status" value="1"/>
</dbReference>
<reference key="1">
    <citation type="submission" date="2008-01" db="EMBL/GenBank/DDBJ databases">
        <title>Complete sequence of Thermoanaerobacter sp. X514.</title>
        <authorList>
            <consortium name="US DOE Joint Genome Institute"/>
            <person name="Copeland A."/>
            <person name="Lucas S."/>
            <person name="Lapidus A."/>
            <person name="Barry K."/>
            <person name="Glavina del Rio T."/>
            <person name="Dalin E."/>
            <person name="Tice H."/>
            <person name="Pitluck S."/>
            <person name="Bruce D."/>
            <person name="Goodwin L."/>
            <person name="Saunders E."/>
            <person name="Brettin T."/>
            <person name="Detter J.C."/>
            <person name="Han C."/>
            <person name="Schmutz J."/>
            <person name="Larimer F."/>
            <person name="Land M."/>
            <person name="Hauser L."/>
            <person name="Kyrpides N."/>
            <person name="Kim E."/>
            <person name="Hemme C."/>
            <person name="Fields M.W."/>
            <person name="He Z."/>
            <person name="Zhou J."/>
            <person name="Richardson P."/>
        </authorList>
    </citation>
    <scope>NUCLEOTIDE SEQUENCE [LARGE SCALE GENOMIC DNA]</scope>
    <source>
        <strain>X514</strain>
    </source>
</reference>
<name>PRMA_THEPX</name>
<comment type="function">
    <text evidence="1">Methylates ribosomal protein L11.</text>
</comment>
<comment type="catalytic activity">
    <reaction evidence="1">
        <text>L-lysyl-[protein] + 3 S-adenosyl-L-methionine = N(6),N(6),N(6)-trimethyl-L-lysyl-[protein] + 3 S-adenosyl-L-homocysteine + 3 H(+)</text>
        <dbReference type="Rhea" id="RHEA:54192"/>
        <dbReference type="Rhea" id="RHEA-COMP:9752"/>
        <dbReference type="Rhea" id="RHEA-COMP:13826"/>
        <dbReference type="ChEBI" id="CHEBI:15378"/>
        <dbReference type="ChEBI" id="CHEBI:29969"/>
        <dbReference type="ChEBI" id="CHEBI:57856"/>
        <dbReference type="ChEBI" id="CHEBI:59789"/>
        <dbReference type="ChEBI" id="CHEBI:61961"/>
    </reaction>
</comment>
<comment type="subcellular location">
    <subcellularLocation>
        <location evidence="1">Cytoplasm</location>
    </subcellularLocation>
</comment>
<comment type="similarity">
    <text evidence="1">Belongs to the methyltransferase superfamily. PrmA family.</text>
</comment>
<sequence>MKWIEVQVTTTQEAEEAVTNIMHELGAGGVVIKNPNDVKLLAQSDNWDYLDSSLFEEEGNIKVFAYFPIASDTTDKINILKDRIVELKSFGIDIGNFDVKVSEVDEADWENNWKQYYKPLKIGKKIVIKPSWEEYVSQGEEIIIELDPGMAFGTGTHETTKMCLEFLEDIVMPESIVFDVGCGSGILSITSSKLGAKEVYAADIDEVSVEVARQNVELNNLQNVKVFKSDLLGEFRGKADIIVANIIADVIIRLSAEAPKYLKEEGLFLASGIIKSRKKEVMEKIQPFFEILQIKEEGEWCTILSRKK</sequence>
<evidence type="ECO:0000255" key="1">
    <source>
        <dbReference type="HAMAP-Rule" id="MF_00735"/>
    </source>
</evidence>
<proteinExistence type="inferred from homology"/>
<gene>
    <name evidence="1" type="primary">prmA</name>
    <name type="ordered locus">Teth514_2077</name>
</gene>